<gene>
    <name evidence="1" type="primary">Tango7</name>
    <name type="ORF">GA20974</name>
</gene>
<accession>Q292F0</accession>
<sequence>MTSHPVFIDLSLDEQVQELRKYFKKLGAEISSEKSNKGVEDDLHKIIGVCDVCFKDGEPSQIDGILNSIVSIMITIPLDRGENIVLAYCEKMTKAPNQPLGKVCLQSLWRLFNNLDTASPLRYHVYYHLVQVAKQCEQVLEVFTGVDQLKTQFANCPPSSEQMQKLYRLLHDVTKDTNMELSSKVMIELLGTYTADNACVAREDAMKCIVTALADPNTFLLDPLLALKPVRFLEGDLIHDLLSIFVSDKLPSYVQFYEDHKEFVNSQGLNHEQNMKKMRLLTFMQLAESNPEMTFDTLTKELQITEDEVEPFVIQVLKTKLVRARLDQANRKVHISSTMHRTFGAPQWEQLRDLLQAWKENLSSVRDGLTNVSSAQLELARTQKLIH</sequence>
<feature type="chain" id="PRO_0000308203" description="Eukaryotic translation initiation factor 3 subunit M">
    <location>
        <begin position="1"/>
        <end position="387"/>
    </location>
</feature>
<feature type="domain" description="PCI" evidence="2">
    <location>
        <begin position="181"/>
        <end position="340"/>
    </location>
</feature>
<dbReference type="EMBL" id="CM000071">
    <property type="protein sequence ID" value="EAL24912.1"/>
    <property type="molecule type" value="Genomic_DNA"/>
</dbReference>
<dbReference type="SMR" id="Q292F0"/>
<dbReference type="FunCoup" id="Q292F0">
    <property type="interactions" value="2348"/>
</dbReference>
<dbReference type="STRING" id="46245.Q292F0"/>
<dbReference type="EnsemblMetazoa" id="FBtr0278561">
    <property type="protein sequence ID" value="FBpp0276999"/>
    <property type="gene ID" value="FBgn0080963"/>
</dbReference>
<dbReference type="GeneID" id="4803654"/>
<dbReference type="KEGG" id="dpo:4803654"/>
<dbReference type="CTD" id="10480"/>
<dbReference type="eggNOG" id="KOG2753">
    <property type="taxonomic scope" value="Eukaryota"/>
</dbReference>
<dbReference type="HOGENOM" id="CLU_035254_1_0_1"/>
<dbReference type="InParanoid" id="Q292F0"/>
<dbReference type="OMA" id="VCLKALW"/>
<dbReference type="PhylomeDB" id="Q292F0"/>
<dbReference type="Proteomes" id="UP000001819">
    <property type="component" value="Chromosome 3"/>
</dbReference>
<dbReference type="Bgee" id="FBgn0080963">
    <property type="expression patterns" value="Expressed in female reproductive system and 2 other cell types or tissues"/>
</dbReference>
<dbReference type="GO" id="GO:0016282">
    <property type="term" value="C:eukaryotic 43S preinitiation complex"/>
    <property type="evidence" value="ECO:0007669"/>
    <property type="project" value="UniProtKB-UniRule"/>
</dbReference>
<dbReference type="GO" id="GO:0033290">
    <property type="term" value="C:eukaryotic 48S preinitiation complex"/>
    <property type="evidence" value="ECO:0007669"/>
    <property type="project" value="UniProtKB-UniRule"/>
</dbReference>
<dbReference type="GO" id="GO:0071541">
    <property type="term" value="C:eukaryotic translation initiation factor 3 complex, eIF3m"/>
    <property type="evidence" value="ECO:0007669"/>
    <property type="project" value="UniProtKB-UniRule"/>
</dbReference>
<dbReference type="GO" id="GO:0005794">
    <property type="term" value="C:Golgi apparatus"/>
    <property type="evidence" value="ECO:0000250"/>
    <property type="project" value="UniProtKB"/>
</dbReference>
<dbReference type="GO" id="GO:0003743">
    <property type="term" value="F:translation initiation factor activity"/>
    <property type="evidence" value="ECO:0007669"/>
    <property type="project" value="UniProtKB-UniRule"/>
</dbReference>
<dbReference type="GO" id="GO:0001732">
    <property type="term" value="P:formation of cytoplasmic translation initiation complex"/>
    <property type="evidence" value="ECO:0007669"/>
    <property type="project" value="UniProtKB-UniRule"/>
</dbReference>
<dbReference type="GO" id="GO:0009306">
    <property type="term" value="P:protein secretion"/>
    <property type="evidence" value="ECO:0000250"/>
    <property type="project" value="UniProtKB"/>
</dbReference>
<dbReference type="HAMAP" id="MF_03012">
    <property type="entry name" value="eIF3m"/>
    <property type="match status" value="1"/>
</dbReference>
<dbReference type="InterPro" id="IPR016024">
    <property type="entry name" value="ARM-type_fold"/>
</dbReference>
<dbReference type="InterPro" id="IPR045237">
    <property type="entry name" value="COPS7/eIF3m"/>
</dbReference>
<dbReference type="InterPro" id="IPR027528">
    <property type="entry name" value="eIF3m"/>
</dbReference>
<dbReference type="InterPro" id="IPR040750">
    <property type="entry name" value="eIF3m_C_helix"/>
</dbReference>
<dbReference type="InterPro" id="IPR000717">
    <property type="entry name" value="PCI_dom"/>
</dbReference>
<dbReference type="InterPro" id="IPR036390">
    <property type="entry name" value="WH_DNA-bd_sf"/>
</dbReference>
<dbReference type="PANTHER" id="PTHR15350">
    <property type="entry name" value="COP9 SIGNALOSOME COMPLEX SUBUNIT 7/DENDRITIC CELL PROTEIN GA17"/>
    <property type="match status" value="1"/>
</dbReference>
<dbReference type="PANTHER" id="PTHR15350:SF2">
    <property type="entry name" value="EUKARYOTIC TRANSLATION INITIATION FACTOR 3 SUBUNIT M"/>
    <property type="match status" value="1"/>
</dbReference>
<dbReference type="Pfam" id="PF18005">
    <property type="entry name" value="eIF3m_C_helix"/>
    <property type="match status" value="1"/>
</dbReference>
<dbReference type="Pfam" id="PF01399">
    <property type="entry name" value="PCI"/>
    <property type="match status" value="1"/>
</dbReference>
<dbReference type="SMART" id="SM00088">
    <property type="entry name" value="PINT"/>
    <property type="match status" value="1"/>
</dbReference>
<dbReference type="SUPFAM" id="SSF48371">
    <property type="entry name" value="ARM repeat"/>
    <property type="match status" value="1"/>
</dbReference>
<dbReference type="SUPFAM" id="SSF46785">
    <property type="entry name" value="Winged helix' DNA-binding domain"/>
    <property type="match status" value="1"/>
</dbReference>
<dbReference type="PROSITE" id="PS50250">
    <property type="entry name" value="PCI"/>
    <property type="match status" value="1"/>
</dbReference>
<reference key="1">
    <citation type="journal article" date="2005" name="Genome Res.">
        <title>Comparative genome sequencing of Drosophila pseudoobscura: chromosomal, gene, and cis-element evolution.</title>
        <authorList>
            <person name="Richards S."/>
            <person name="Liu Y."/>
            <person name="Bettencourt B.R."/>
            <person name="Hradecky P."/>
            <person name="Letovsky S."/>
            <person name="Nielsen R."/>
            <person name="Thornton K."/>
            <person name="Hubisz M.J."/>
            <person name="Chen R."/>
            <person name="Meisel R.P."/>
            <person name="Couronne O."/>
            <person name="Hua S."/>
            <person name="Smith M.A."/>
            <person name="Zhang P."/>
            <person name="Liu J."/>
            <person name="Bussemaker H.J."/>
            <person name="van Batenburg M.F."/>
            <person name="Howells S.L."/>
            <person name="Scherer S.E."/>
            <person name="Sodergren E."/>
            <person name="Matthews B.B."/>
            <person name="Crosby M.A."/>
            <person name="Schroeder A.J."/>
            <person name="Ortiz-Barrientos D."/>
            <person name="Rives C.M."/>
            <person name="Metzker M.L."/>
            <person name="Muzny D.M."/>
            <person name="Scott G."/>
            <person name="Steffen D."/>
            <person name="Wheeler D.A."/>
            <person name="Worley K.C."/>
            <person name="Havlak P."/>
            <person name="Durbin K.J."/>
            <person name="Egan A."/>
            <person name="Gill R."/>
            <person name="Hume J."/>
            <person name="Morgan M.B."/>
            <person name="Miner G."/>
            <person name="Hamilton C."/>
            <person name="Huang Y."/>
            <person name="Waldron L."/>
            <person name="Verduzco D."/>
            <person name="Clerc-Blankenburg K.P."/>
            <person name="Dubchak I."/>
            <person name="Noor M.A.F."/>
            <person name="Anderson W."/>
            <person name="White K.P."/>
            <person name="Clark A.G."/>
            <person name="Schaeffer S.W."/>
            <person name="Gelbart W.M."/>
            <person name="Weinstock G.M."/>
            <person name="Gibbs R.A."/>
        </authorList>
    </citation>
    <scope>NUCLEOTIDE SEQUENCE [LARGE SCALE GENOMIC DNA]</scope>
    <source>
        <strain>MV2-25 / Tucson 14011-0121.94</strain>
    </source>
</reference>
<keyword id="KW-0963">Cytoplasm</keyword>
<keyword id="KW-0333">Golgi apparatus</keyword>
<keyword id="KW-0396">Initiation factor</keyword>
<keyword id="KW-0648">Protein biosynthesis</keyword>
<keyword id="KW-1185">Reference proteome</keyword>
<evidence type="ECO:0000255" key="1">
    <source>
        <dbReference type="HAMAP-Rule" id="MF_03012"/>
    </source>
</evidence>
<evidence type="ECO:0000255" key="2">
    <source>
        <dbReference type="PROSITE-ProRule" id="PRU01185"/>
    </source>
</evidence>
<protein>
    <recommendedName>
        <fullName evidence="1">Eukaryotic translation initiation factor 3 subunit M</fullName>
        <shortName evidence="1">eIF3m</shortName>
    </recommendedName>
    <alternativeName>
        <fullName evidence="1">Transport and Golgi organization protein 7</fullName>
        <shortName evidence="1">Tango-7</shortName>
    </alternativeName>
</protein>
<comment type="function">
    <text evidence="1">Component of the eukaryotic translation initiation factor 3 (eIF-3) complex, which is involved in protein synthesis of a specialized repertoire of mRNAs and, together with other initiation factors, stimulates binding of mRNA and methionyl-tRNAi to the 40S ribosome. The eIF-3 complex specifically targets and initiates translation of a subset of mRNAs involved in cell proliferation.</text>
</comment>
<comment type="subunit">
    <text evidence="1">Component of the eukaryotic translation initiation factor 3 (eIF-3) complex. The eIF-3 complex interacts with pix.</text>
</comment>
<comment type="subcellular location">
    <subcellularLocation>
        <location evidence="1">Cytoplasm</location>
    </subcellularLocation>
    <subcellularLocation>
        <location evidence="1">Golgi apparatus</location>
    </subcellularLocation>
</comment>
<comment type="similarity">
    <text evidence="1">Belongs to the eIF-3 subunit M family.</text>
</comment>
<proteinExistence type="inferred from homology"/>
<organism>
    <name type="scientific">Drosophila pseudoobscura pseudoobscura</name>
    <name type="common">Fruit fly</name>
    <dbReference type="NCBI Taxonomy" id="46245"/>
    <lineage>
        <taxon>Eukaryota</taxon>
        <taxon>Metazoa</taxon>
        <taxon>Ecdysozoa</taxon>
        <taxon>Arthropoda</taxon>
        <taxon>Hexapoda</taxon>
        <taxon>Insecta</taxon>
        <taxon>Pterygota</taxon>
        <taxon>Neoptera</taxon>
        <taxon>Endopterygota</taxon>
        <taxon>Diptera</taxon>
        <taxon>Brachycera</taxon>
        <taxon>Muscomorpha</taxon>
        <taxon>Ephydroidea</taxon>
        <taxon>Drosophilidae</taxon>
        <taxon>Drosophila</taxon>
        <taxon>Sophophora</taxon>
    </lineage>
</organism>
<name>EIF3M_DROPS</name>